<sequence>MSTDKTNQSWGGRFSEPVDAFVARFTASVTFDQRLYRHDIMGSIAHATMLAKVGVLTDAERDSIIDGLKTIQGEIEAGQFDWRVDLEDVHMNIEARLTDRIGVTGKKLHTGRSRNDQVATDIRLWLRDEIDLILSEITRLQKGLLEQAEREAASIMPGFTHLQTAQPVTFGHHMLAWFEMLSRDYERLVDCRKRTNRMPLGSAALAGTTYPIDREYTAQLLGFDAVGGNSLDNVSDRDFAIEFCSAASIAMMHLSRFSEELVLWTSAQFQFIDLPDRFCTGSSIMPQKKNPDVPELVRGKTGRVFGALMGLLTLMKGQPLAYNKDNQEDKEPLFDAADTLRDSLRAFADMIPAIKPKHAIMREAALRGFSTATDLADYLVRRGLPFRDCHEIVGHAVKYGVDTGKDLAEMSLEELRQFSDQIEQDVFAVLTLEGSVNARDHIGGTAPAQVKAAVVRGQALIASR</sequence>
<proteinExistence type="inferred from homology"/>
<organism>
    <name type="scientific">Pseudomonas fluorescens (strain Pf0-1)</name>
    <dbReference type="NCBI Taxonomy" id="205922"/>
    <lineage>
        <taxon>Bacteria</taxon>
        <taxon>Pseudomonadati</taxon>
        <taxon>Pseudomonadota</taxon>
        <taxon>Gammaproteobacteria</taxon>
        <taxon>Pseudomonadales</taxon>
        <taxon>Pseudomonadaceae</taxon>
        <taxon>Pseudomonas</taxon>
    </lineage>
</organism>
<dbReference type="EC" id="4.3.2.1" evidence="1"/>
<dbReference type="EMBL" id="CP000094">
    <property type="protein sequence ID" value="ABA77226.1"/>
    <property type="molecule type" value="Genomic_DNA"/>
</dbReference>
<dbReference type="SMR" id="Q3K4S8"/>
<dbReference type="KEGG" id="pfo:Pfl01_5489"/>
<dbReference type="eggNOG" id="COG0165">
    <property type="taxonomic scope" value="Bacteria"/>
</dbReference>
<dbReference type="HOGENOM" id="CLU_027272_2_3_6"/>
<dbReference type="UniPathway" id="UPA00068">
    <property type="reaction ID" value="UER00114"/>
</dbReference>
<dbReference type="Proteomes" id="UP000002704">
    <property type="component" value="Chromosome"/>
</dbReference>
<dbReference type="GO" id="GO:0005829">
    <property type="term" value="C:cytosol"/>
    <property type="evidence" value="ECO:0007669"/>
    <property type="project" value="TreeGrafter"/>
</dbReference>
<dbReference type="GO" id="GO:0004056">
    <property type="term" value="F:argininosuccinate lyase activity"/>
    <property type="evidence" value="ECO:0007669"/>
    <property type="project" value="UniProtKB-UniRule"/>
</dbReference>
<dbReference type="GO" id="GO:0042450">
    <property type="term" value="P:arginine biosynthetic process via ornithine"/>
    <property type="evidence" value="ECO:0007669"/>
    <property type="project" value="InterPro"/>
</dbReference>
<dbReference type="GO" id="GO:0006526">
    <property type="term" value="P:L-arginine biosynthetic process"/>
    <property type="evidence" value="ECO:0007669"/>
    <property type="project" value="UniProtKB-UniRule"/>
</dbReference>
<dbReference type="CDD" id="cd01359">
    <property type="entry name" value="Argininosuccinate_lyase"/>
    <property type="match status" value="1"/>
</dbReference>
<dbReference type="FunFam" id="1.10.275.10:FF:000002">
    <property type="entry name" value="Argininosuccinate lyase"/>
    <property type="match status" value="1"/>
</dbReference>
<dbReference type="FunFam" id="1.10.40.30:FF:000001">
    <property type="entry name" value="Argininosuccinate lyase"/>
    <property type="match status" value="1"/>
</dbReference>
<dbReference type="FunFam" id="1.20.200.10:FF:000015">
    <property type="entry name" value="argininosuccinate lyase isoform X2"/>
    <property type="match status" value="1"/>
</dbReference>
<dbReference type="Gene3D" id="1.10.40.30">
    <property type="entry name" value="Fumarase/aspartase (C-terminal domain)"/>
    <property type="match status" value="1"/>
</dbReference>
<dbReference type="Gene3D" id="1.20.200.10">
    <property type="entry name" value="Fumarase/aspartase (Central domain)"/>
    <property type="match status" value="1"/>
</dbReference>
<dbReference type="Gene3D" id="1.10.275.10">
    <property type="entry name" value="Fumarase/aspartase (N-terminal domain)"/>
    <property type="match status" value="1"/>
</dbReference>
<dbReference type="HAMAP" id="MF_00006">
    <property type="entry name" value="Arg_succ_lyase"/>
    <property type="match status" value="1"/>
</dbReference>
<dbReference type="InterPro" id="IPR029419">
    <property type="entry name" value="Arg_succ_lyase_C"/>
</dbReference>
<dbReference type="InterPro" id="IPR009049">
    <property type="entry name" value="Argininosuccinate_lyase"/>
</dbReference>
<dbReference type="InterPro" id="IPR024083">
    <property type="entry name" value="Fumarase/histidase_N"/>
</dbReference>
<dbReference type="InterPro" id="IPR020557">
    <property type="entry name" value="Fumarate_lyase_CS"/>
</dbReference>
<dbReference type="InterPro" id="IPR000362">
    <property type="entry name" value="Fumarate_lyase_fam"/>
</dbReference>
<dbReference type="InterPro" id="IPR022761">
    <property type="entry name" value="Fumarate_lyase_N"/>
</dbReference>
<dbReference type="InterPro" id="IPR008948">
    <property type="entry name" value="L-Aspartase-like"/>
</dbReference>
<dbReference type="NCBIfam" id="TIGR00838">
    <property type="entry name" value="argH"/>
    <property type="match status" value="1"/>
</dbReference>
<dbReference type="PANTHER" id="PTHR43814">
    <property type="entry name" value="ARGININOSUCCINATE LYASE"/>
    <property type="match status" value="1"/>
</dbReference>
<dbReference type="PANTHER" id="PTHR43814:SF1">
    <property type="entry name" value="ARGININOSUCCINATE LYASE"/>
    <property type="match status" value="1"/>
</dbReference>
<dbReference type="Pfam" id="PF14698">
    <property type="entry name" value="ASL_C2"/>
    <property type="match status" value="1"/>
</dbReference>
<dbReference type="Pfam" id="PF00206">
    <property type="entry name" value="Lyase_1"/>
    <property type="match status" value="1"/>
</dbReference>
<dbReference type="PRINTS" id="PR00145">
    <property type="entry name" value="ARGSUCLYASE"/>
</dbReference>
<dbReference type="PRINTS" id="PR00149">
    <property type="entry name" value="FUMRATELYASE"/>
</dbReference>
<dbReference type="SUPFAM" id="SSF48557">
    <property type="entry name" value="L-aspartase-like"/>
    <property type="match status" value="1"/>
</dbReference>
<dbReference type="PROSITE" id="PS00163">
    <property type="entry name" value="FUMARATE_LYASES"/>
    <property type="match status" value="1"/>
</dbReference>
<accession>Q3K4S8</accession>
<evidence type="ECO:0000255" key="1">
    <source>
        <dbReference type="HAMAP-Rule" id="MF_00006"/>
    </source>
</evidence>
<gene>
    <name evidence="1" type="primary">argH2</name>
    <name type="ordered locus">Pfl01_5489</name>
</gene>
<reference key="1">
    <citation type="journal article" date="2009" name="Genome Biol.">
        <title>Genomic and genetic analyses of diversity and plant interactions of Pseudomonas fluorescens.</title>
        <authorList>
            <person name="Silby M.W."/>
            <person name="Cerdeno-Tarraga A.M."/>
            <person name="Vernikos G.S."/>
            <person name="Giddens S.R."/>
            <person name="Jackson R.W."/>
            <person name="Preston G.M."/>
            <person name="Zhang X.-X."/>
            <person name="Moon C.D."/>
            <person name="Gehrig S.M."/>
            <person name="Godfrey S.A.C."/>
            <person name="Knight C.G."/>
            <person name="Malone J.G."/>
            <person name="Robinson Z."/>
            <person name="Spiers A.J."/>
            <person name="Harris S."/>
            <person name="Challis G.L."/>
            <person name="Yaxley A.M."/>
            <person name="Harris D."/>
            <person name="Seeger K."/>
            <person name="Murphy L."/>
            <person name="Rutter S."/>
            <person name="Squares R."/>
            <person name="Quail M.A."/>
            <person name="Saunders E."/>
            <person name="Mavromatis K."/>
            <person name="Brettin T.S."/>
            <person name="Bentley S.D."/>
            <person name="Hothersall J."/>
            <person name="Stephens E."/>
            <person name="Thomas C.M."/>
            <person name="Parkhill J."/>
            <person name="Levy S.B."/>
            <person name="Rainey P.B."/>
            <person name="Thomson N.R."/>
        </authorList>
    </citation>
    <scope>NUCLEOTIDE SEQUENCE [LARGE SCALE GENOMIC DNA]</scope>
    <source>
        <strain>Pf0-1</strain>
    </source>
</reference>
<name>ARLY2_PSEPF</name>
<protein>
    <recommendedName>
        <fullName evidence="1">Argininosuccinate lyase 2</fullName>
        <shortName evidence="1">ASAL 2</shortName>
        <ecNumber evidence="1">4.3.2.1</ecNumber>
    </recommendedName>
    <alternativeName>
        <fullName evidence="1">Arginosuccinase 2</fullName>
    </alternativeName>
</protein>
<comment type="catalytic activity">
    <reaction evidence="1">
        <text>2-(N(omega)-L-arginino)succinate = fumarate + L-arginine</text>
        <dbReference type="Rhea" id="RHEA:24020"/>
        <dbReference type="ChEBI" id="CHEBI:29806"/>
        <dbReference type="ChEBI" id="CHEBI:32682"/>
        <dbReference type="ChEBI" id="CHEBI:57472"/>
        <dbReference type="EC" id="4.3.2.1"/>
    </reaction>
</comment>
<comment type="pathway">
    <text evidence="1">Amino-acid biosynthesis; L-arginine biosynthesis; L-arginine from L-ornithine and carbamoyl phosphate: step 3/3.</text>
</comment>
<comment type="subcellular location">
    <subcellularLocation>
        <location evidence="1">Cytoplasm</location>
    </subcellularLocation>
</comment>
<comment type="similarity">
    <text evidence="1">Belongs to the lyase 1 family. Argininosuccinate lyase subfamily.</text>
</comment>
<keyword id="KW-0028">Amino-acid biosynthesis</keyword>
<keyword id="KW-0055">Arginine biosynthesis</keyword>
<keyword id="KW-0963">Cytoplasm</keyword>
<keyword id="KW-0456">Lyase</keyword>
<feature type="chain" id="PRO_0000240753" description="Argininosuccinate lyase 2">
    <location>
        <begin position="1"/>
        <end position="464"/>
    </location>
</feature>